<dbReference type="EC" id="2.7.1.92"/>
<dbReference type="EMBL" id="D14399">
    <property type="protein sequence ID" value="BAA03292.1"/>
    <property type="molecule type" value="Genomic_DNA"/>
</dbReference>
<dbReference type="EMBL" id="AL009126">
    <property type="protein sequence ID" value="CAB16010.1"/>
    <property type="molecule type" value="Genomic_DNA"/>
</dbReference>
<dbReference type="PIR" id="C69645">
    <property type="entry name" value="C69645"/>
</dbReference>
<dbReference type="RefSeq" id="NP_391853.1">
    <property type="nucleotide sequence ID" value="NC_000964.3"/>
</dbReference>
<dbReference type="RefSeq" id="WP_003243753.1">
    <property type="nucleotide sequence ID" value="NZ_OZ025638.1"/>
</dbReference>
<dbReference type="SMR" id="P42414"/>
<dbReference type="FunCoup" id="P42414">
    <property type="interactions" value="194"/>
</dbReference>
<dbReference type="STRING" id="224308.BSU39740"/>
<dbReference type="jPOST" id="P42414"/>
<dbReference type="PaxDb" id="224308-BSU39740"/>
<dbReference type="EnsemblBacteria" id="CAB16010">
    <property type="protein sequence ID" value="CAB16010"/>
    <property type="gene ID" value="BSU_39740"/>
</dbReference>
<dbReference type="GeneID" id="937622"/>
<dbReference type="KEGG" id="bsu:BSU39740"/>
<dbReference type="PATRIC" id="fig|224308.179.peg.4299"/>
<dbReference type="eggNOG" id="COG0524">
    <property type="taxonomic scope" value="Bacteria"/>
</dbReference>
<dbReference type="InParanoid" id="P42414"/>
<dbReference type="OrthoDB" id="9813569at2"/>
<dbReference type="PhylomeDB" id="P42414"/>
<dbReference type="BioCyc" id="BSUB:BSU39740-MONOMER"/>
<dbReference type="BioCyc" id="MetaCyc:BSU39740-MONOMER"/>
<dbReference type="UniPathway" id="UPA00076">
    <property type="reaction ID" value="UER00146"/>
</dbReference>
<dbReference type="Proteomes" id="UP000001570">
    <property type="component" value="Chromosome"/>
</dbReference>
<dbReference type="GO" id="GO:0047590">
    <property type="term" value="F:5-dehydro-2-deoxygluconokinase activity"/>
    <property type="evidence" value="ECO:0007669"/>
    <property type="project" value="UniProtKB-UniRule"/>
</dbReference>
<dbReference type="GO" id="GO:0005524">
    <property type="term" value="F:ATP binding"/>
    <property type="evidence" value="ECO:0007669"/>
    <property type="project" value="UniProtKB-UniRule"/>
</dbReference>
<dbReference type="GO" id="GO:0019310">
    <property type="term" value="P:inositol catabolic process"/>
    <property type="evidence" value="ECO:0007669"/>
    <property type="project" value="UniProtKB-UniRule"/>
</dbReference>
<dbReference type="CDD" id="cd01166">
    <property type="entry name" value="KdgK"/>
    <property type="match status" value="1"/>
</dbReference>
<dbReference type="Gene3D" id="3.40.1190.20">
    <property type="match status" value="1"/>
</dbReference>
<dbReference type="Gene3D" id="2.20.150.10">
    <property type="entry name" value="putative 5-dehydro-2- deoxygluconokinase"/>
    <property type="match status" value="1"/>
</dbReference>
<dbReference type="HAMAP" id="MF_01668">
    <property type="entry name" value="IolC"/>
    <property type="match status" value="1"/>
</dbReference>
<dbReference type="InterPro" id="IPR002173">
    <property type="entry name" value="Carboh/pur_kinase_PfkB_CS"/>
</dbReference>
<dbReference type="InterPro" id="IPR022841">
    <property type="entry name" value="DKG_kinase_firmi"/>
</dbReference>
<dbReference type="InterPro" id="IPR030830">
    <property type="entry name" value="Myo_inos_IolC"/>
</dbReference>
<dbReference type="InterPro" id="IPR023314">
    <property type="entry name" value="Myo_inos_IolC-like_sf"/>
</dbReference>
<dbReference type="InterPro" id="IPR050306">
    <property type="entry name" value="PfkB_Carbo_kinase"/>
</dbReference>
<dbReference type="InterPro" id="IPR011611">
    <property type="entry name" value="PfkB_dom"/>
</dbReference>
<dbReference type="InterPro" id="IPR029056">
    <property type="entry name" value="Ribokinase-like"/>
</dbReference>
<dbReference type="NCBIfam" id="TIGR04382">
    <property type="entry name" value="myo_inos_iolC_N"/>
    <property type="match status" value="1"/>
</dbReference>
<dbReference type="PANTHER" id="PTHR43085:SF49">
    <property type="entry name" value="5-DEHYDRO-2-DEOXYGLUCONOKINASE"/>
    <property type="match status" value="1"/>
</dbReference>
<dbReference type="PANTHER" id="PTHR43085">
    <property type="entry name" value="HEXOKINASE FAMILY MEMBER"/>
    <property type="match status" value="1"/>
</dbReference>
<dbReference type="Pfam" id="PF00294">
    <property type="entry name" value="PfkB"/>
    <property type="match status" value="1"/>
</dbReference>
<dbReference type="SUPFAM" id="SSF53613">
    <property type="entry name" value="Ribokinase-like"/>
    <property type="match status" value="1"/>
</dbReference>
<dbReference type="PROSITE" id="PS00584">
    <property type="entry name" value="PFKB_KINASES_2"/>
    <property type="match status" value="1"/>
</dbReference>
<organism>
    <name type="scientific">Bacillus subtilis (strain 168)</name>
    <dbReference type="NCBI Taxonomy" id="224308"/>
    <lineage>
        <taxon>Bacteria</taxon>
        <taxon>Bacillati</taxon>
        <taxon>Bacillota</taxon>
        <taxon>Bacilli</taxon>
        <taxon>Bacillales</taxon>
        <taxon>Bacillaceae</taxon>
        <taxon>Bacillus</taxon>
    </lineage>
</organism>
<feature type="chain" id="PRO_0000080073" description="5-dehydro-2-deoxygluconokinase">
    <location>
        <begin position="1"/>
        <end position="325"/>
    </location>
</feature>
<name>IOLC_BACSU</name>
<reference key="1">
    <citation type="journal article" date="1994" name="Microbiology">
        <title>Cloning and nucleotide sequencing of a 15 kb region of the Bacillus subtilis genome containing the iol operon.</title>
        <authorList>
            <person name="Yoshida K."/>
            <person name="Sano H."/>
            <person name="Miwa Y."/>
            <person name="Ogasawara N."/>
            <person name="Fujita Y."/>
        </authorList>
    </citation>
    <scope>NUCLEOTIDE SEQUENCE [GENOMIC DNA]</scope>
    <source>
        <strain>168 / BGSC1A1</strain>
    </source>
</reference>
<reference key="2">
    <citation type="journal article" date="1997" name="Nature">
        <title>The complete genome sequence of the Gram-positive bacterium Bacillus subtilis.</title>
        <authorList>
            <person name="Kunst F."/>
            <person name="Ogasawara N."/>
            <person name="Moszer I."/>
            <person name="Albertini A.M."/>
            <person name="Alloni G."/>
            <person name="Azevedo V."/>
            <person name="Bertero M.G."/>
            <person name="Bessieres P."/>
            <person name="Bolotin A."/>
            <person name="Borchert S."/>
            <person name="Borriss R."/>
            <person name="Boursier L."/>
            <person name="Brans A."/>
            <person name="Braun M."/>
            <person name="Brignell S.C."/>
            <person name="Bron S."/>
            <person name="Brouillet S."/>
            <person name="Bruschi C.V."/>
            <person name="Caldwell B."/>
            <person name="Capuano V."/>
            <person name="Carter N.M."/>
            <person name="Choi S.-K."/>
            <person name="Codani J.-J."/>
            <person name="Connerton I.F."/>
            <person name="Cummings N.J."/>
            <person name="Daniel R.A."/>
            <person name="Denizot F."/>
            <person name="Devine K.M."/>
            <person name="Duesterhoeft A."/>
            <person name="Ehrlich S.D."/>
            <person name="Emmerson P.T."/>
            <person name="Entian K.-D."/>
            <person name="Errington J."/>
            <person name="Fabret C."/>
            <person name="Ferrari E."/>
            <person name="Foulger D."/>
            <person name="Fritz C."/>
            <person name="Fujita M."/>
            <person name="Fujita Y."/>
            <person name="Fuma S."/>
            <person name="Galizzi A."/>
            <person name="Galleron N."/>
            <person name="Ghim S.-Y."/>
            <person name="Glaser P."/>
            <person name="Goffeau A."/>
            <person name="Golightly E.J."/>
            <person name="Grandi G."/>
            <person name="Guiseppi G."/>
            <person name="Guy B.J."/>
            <person name="Haga K."/>
            <person name="Haiech J."/>
            <person name="Harwood C.R."/>
            <person name="Henaut A."/>
            <person name="Hilbert H."/>
            <person name="Holsappel S."/>
            <person name="Hosono S."/>
            <person name="Hullo M.-F."/>
            <person name="Itaya M."/>
            <person name="Jones L.-M."/>
            <person name="Joris B."/>
            <person name="Karamata D."/>
            <person name="Kasahara Y."/>
            <person name="Klaerr-Blanchard M."/>
            <person name="Klein C."/>
            <person name="Kobayashi Y."/>
            <person name="Koetter P."/>
            <person name="Koningstein G."/>
            <person name="Krogh S."/>
            <person name="Kumano M."/>
            <person name="Kurita K."/>
            <person name="Lapidus A."/>
            <person name="Lardinois S."/>
            <person name="Lauber J."/>
            <person name="Lazarevic V."/>
            <person name="Lee S.-M."/>
            <person name="Levine A."/>
            <person name="Liu H."/>
            <person name="Masuda S."/>
            <person name="Mauel C."/>
            <person name="Medigue C."/>
            <person name="Medina N."/>
            <person name="Mellado R.P."/>
            <person name="Mizuno M."/>
            <person name="Moestl D."/>
            <person name="Nakai S."/>
            <person name="Noback M."/>
            <person name="Noone D."/>
            <person name="O'Reilly M."/>
            <person name="Ogawa K."/>
            <person name="Ogiwara A."/>
            <person name="Oudega B."/>
            <person name="Park S.-H."/>
            <person name="Parro V."/>
            <person name="Pohl T.M."/>
            <person name="Portetelle D."/>
            <person name="Porwollik S."/>
            <person name="Prescott A.M."/>
            <person name="Presecan E."/>
            <person name="Pujic P."/>
            <person name="Purnelle B."/>
            <person name="Rapoport G."/>
            <person name="Rey M."/>
            <person name="Reynolds S."/>
            <person name="Rieger M."/>
            <person name="Rivolta C."/>
            <person name="Rocha E."/>
            <person name="Roche B."/>
            <person name="Rose M."/>
            <person name="Sadaie Y."/>
            <person name="Sato T."/>
            <person name="Scanlan E."/>
            <person name="Schleich S."/>
            <person name="Schroeter R."/>
            <person name="Scoffone F."/>
            <person name="Sekiguchi J."/>
            <person name="Sekowska A."/>
            <person name="Seror S.J."/>
            <person name="Serror P."/>
            <person name="Shin B.-S."/>
            <person name="Soldo B."/>
            <person name="Sorokin A."/>
            <person name="Tacconi E."/>
            <person name="Takagi T."/>
            <person name="Takahashi H."/>
            <person name="Takemaru K."/>
            <person name="Takeuchi M."/>
            <person name="Tamakoshi A."/>
            <person name="Tanaka T."/>
            <person name="Terpstra P."/>
            <person name="Tognoni A."/>
            <person name="Tosato V."/>
            <person name="Uchiyama S."/>
            <person name="Vandenbol M."/>
            <person name="Vannier F."/>
            <person name="Vassarotti A."/>
            <person name="Viari A."/>
            <person name="Wambutt R."/>
            <person name="Wedler E."/>
            <person name="Wedler H."/>
            <person name="Weitzenegger T."/>
            <person name="Winters P."/>
            <person name="Wipat A."/>
            <person name="Yamamoto H."/>
            <person name="Yamane K."/>
            <person name="Yasumoto K."/>
            <person name="Yata K."/>
            <person name="Yoshida K."/>
            <person name="Yoshikawa H.-F."/>
            <person name="Zumstein E."/>
            <person name="Yoshikawa H."/>
            <person name="Danchin A."/>
        </authorList>
    </citation>
    <scope>NUCLEOTIDE SEQUENCE [LARGE SCALE GENOMIC DNA]</scope>
    <source>
        <strain>168</strain>
    </source>
</reference>
<reference key="3">
    <citation type="journal article" date="2008" name="J. Biol. Chem.">
        <title>Myo-inositol catabolism in Bacillus subtilis.</title>
        <authorList>
            <person name="Yoshida K."/>
            <person name="Yamaguchi M."/>
            <person name="Morinaga T."/>
            <person name="Kinehara M."/>
            <person name="Ikeuchi M."/>
            <person name="Ashida H."/>
            <person name="Fujita Y."/>
        </authorList>
    </citation>
    <scope>FUNCTION</scope>
    <scope>CATALYTIC ACTIVITY</scope>
    <source>
        <strain>168 / 60015</strain>
    </source>
</reference>
<keyword id="KW-0067">ATP-binding</keyword>
<keyword id="KW-0418">Kinase</keyword>
<keyword id="KW-0547">Nucleotide-binding</keyword>
<keyword id="KW-1185">Reference proteome</keyword>
<keyword id="KW-0808">Transferase</keyword>
<protein>
    <recommendedName>
        <fullName>5-dehydro-2-deoxygluconokinase</fullName>
        <ecNumber>2.7.1.92</ecNumber>
    </recommendedName>
    <alternativeName>
        <fullName>2-deoxy-5-keto-D-gluconate kinase</fullName>
        <shortName>DKG kinase</shortName>
    </alternativeName>
</protein>
<sequence length="325" mass="35632">MKYTFNEEKAFDIVAIGRACIDLNAVEYNRPMEETMTFSKYVGGSPANIAIGSAKLGLKAGFIGKIPDDQHGRFIESYMRKTGVDTTQMIVDQDGHKAGLAFTEILSPEECSILMYRDDVADLYLEPSEVSEDYIANAKMLLVSGTALAKSPSREAVLKAVQYAKKHQVKVVFELDYRPYTWQSSDETAVYYSLVAEQSDIVIGTRDEFDVMENRTGGSNEESVNHLFGHSADLVVIKHGVEGSYAYSKSGEVFRAQAYKTKVLKTFGAGDSYASAFIYGLVSGKDIETALKYGSASASIVVSKHSSSEAMPTAEEIEQLIEAQS</sequence>
<comment type="function">
    <text evidence="1">Catalyzes the phosphorylation of 5-dehydro-2-deoxy-D-gluconate (2-deoxy-5-keto-D-gluconate or DKG) to 6-phospho-5-dehydro-2-deoxy-D-gluconate (DKGP).</text>
</comment>
<comment type="catalytic activity">
    <reaction evidence="1">
        <text>5-dehydro-2-deoxy-D-gluconate + ATP = 6-phospho-5-dehydro-2-deoxy-D-gluconate + ADP + H(+)</text>
        <dbReference type="Rhea" id="RHEA:13497"/>
        <dbReference type="ChEBI" id="CHEBI:15378"/>
        <dbReference type="ChEBI" id="CHEBI:16669"/>
        <dbReference type="ChEBI" id="CHEBI:30616"/>
        <dbReference type="ChEBI" id="CHEBI:57949"/>
        <dbReference type="ChEBI" id="CHEBI:456216"/>
        <dbReference type="EC" id="2.7.1.92"/>
    </reaction>
</comment>
<comment type="pathway">
    <text>Polyol metabolism; myo-inositol degradation into acetyl-CoA; acetyl-CoA from myo-inositol: step 5/7.</text>
</comment>
<comment type="similarity">
    <text evidence="2">Belongs to the carbohydrate kinase PfkB family.</text>
</comment>
<proteinExistence type="evidence at protein level"/>
<evidence type="ECO:0000269" key="1">
    <source>
    </source>
</evidence>
<evidence type="ECO:0000305" key="2"/>
<accession>P42414</accession>
<gene>
    <name type="primary">iolC</name>
    <name type="synonym">yxdC</name>
    <name type="ordered locus">BSU39740</name>
    <name type="ORF">E83C</name>
</gene>